<comment type="catalytic activity">
    <reaction>
        <text>an acyl phosphate + H2O = a carboxylate + phosphate + H(+)</text>
        <dbReference type="Rhea" id="RHEA:14965"/>
        <dbReference type="ChEBI" id="CHEBI:15377"/>
        <dbReference type="ChEBI" id="CHEBI:15378"/>
        <dbReference type="ChEBI" id="CHEBI:29067"/>
        <dbReference type="ChEBI" id="CHEBI:43474"/>
        <dbReference type="ChEBI" id="CHEBI:59918"/>
        <dbReference type="EC" id="3.6.1.7"/>
    </reaction>
</comment>
<comment type="similarity">
    <text evidence="2">Belongs to the acylphosphatase family.</text>
</comment>
<evidence type="ECO:0000255" key="1">
    <source>
        <dbReference type="PROSITE-ProRule" id="PRU00520"/>
    </source>
</evidence>
<evidence type="ECO:0000305" key="2"/>
<name>ACYP_RHIEC</name>
<gene>
    <name type="primary">acyP</name>
    <name type="ordered locus">RHE_CH02378</name>
</gene>
<accession>Q2K7M8</accession>
<keyword id="KW-0378">Hydrolase</keyword>
<keyword id="KW-1185">Reference proteome</keyword>
<protein>
    <recommendedName>
        <fullName>Acylphosphatase</fullName>
        <ecNumber>3.6.1.7</ecNumber>
    </recommendedName>
    <alternativeName>
        <fullName>Acylphosphate phosphohydrolase</fullName>
    </alternativeName>
</protein>
<reference key="1">
    <citation type="journal article" date="2006" name="Proc. Natl. Acad. Sci. U.S.A.">
        <title>The partitioned Rhizobium etli genome: genetic and metabolic redundancy in seven interacting replicons.</title>
        <authorList>
            <person name="Gonzalez V."/>
            <person name="Santamaria R.I."/>
            <person name="Bustos P."/>
            <person name="Hernandez-Gonzalez I."/>
            <person name="Medrano-Soto A."/>
            <person name="Moreno-Hagelsieb G."/>
            <person name="Janga S.C."/>
            <person name="Ramirez M.A."/>
            <person name="Jimenez-Jacinto V."/>
            <person name="Collado-Vides J."/>
            <person name="Davila G."/>
        </authorList>
    </citation>
    <scope>NUCLEOTIDE SEQUENCE [LARGE SCALE GENOMIC DNA]</scope>
    <source>
        <strain>ATCC 51251 / DSM 11541 / JCM 21823 / NBRC 15573 / CFN 42</strain>
    </source>
</reference>
<organism>
    <name type="scientific">Rhizobium etli (strain ATCC 51251 / DSM 11541 / JCM 21823 / NBRC 15573 / CFN 42)</name>
    <dbReference type="NCBI Taxonomy" id="347834"/>
    <lineage>
        <taxon>Bacteria</taxon>
        <taxon>Pseudomonadati</taxon>
        <taxon>Pseudomonadota</taxon>
        <taxon>Alphaproteobacteria</taxon>
        <taxon>Hyphomicrobiales</taxon>
        <taxon>Rhizobiaceae</taxon>
        <taxon>Rhizobium/Agrobacterium group</taxon>
        <taxon>Rhizobium</taxon>
    </lineage>
</organism>
<feature type="chain" id="PRO_0000326779" description="Acylphosphatase">
    <location>
        <begin position="1"/>
        <end position="94"/>
    </location>
</feature>
<feature type="domain" description="Acylphosphatase-like" evidence="1">
    <location>
        <begin position="7"/>
        <end position="94"/>
    </location>
</feature>
<feature type="active site" evidence="1">
    <location>
        <position position="22"/>
    </location>
</feature>
<feature type="active site" evidence="1">
    <location>
        <position position="40"/>
    </location>
</feature>
<proteinExistence type="inferred from homology"/>
<dbReference type="EC" id="3.6.1.7"/>
<dbReference type="EMBL" id="CP000133">
    <property type="protein sequence ID" value="ABC91158.1"/>
    <property type="molecule type" value="Genomic_DNA"/>
</dbReference>
<dbReference type="RefSeq" id="WP_011425637.1">
    <property type="nucleotide sequence ID" value="NC_007761.1"/>
</dbReference>
<dbReference type="SMR" id="Q2K7M8"/>
<dbReference type="KEGG" id="ret:RHE_CH02378"/>
<dbReference type="eggNOG" id="COG1254">
    <property type="taxonomic scope" value="Bacteria"/>
</dbReference>
<dbReference type="HOGENOM" id="CLU_141932_3_2_5"/>
<dbReference type="OrthoDB" id="5295388at2"/>
<dbReference type="Proteomes" id="UP000001936">
    <property type="component" value="Chromosome"/>
</dbReference>
<dbReference type="GO" id="GO:0003998">
    <property type="term" value="F:acylphosphatase activity"/>
    <property type="evidence" value="ECO:0007669"/>
    <property type="project" value="UniProtKB-EC"/>
</dbReference>
<dbReference type="Gene3D" id="3.30.70.100">
    <property type="match status" value="1"/>
</dbReference>
<dbReference type="InterPro" id="IPR020456">
    <property type="entry name" value="Acylphosphatase"/>
</dbReference>
<dbReference type="InterPro" id="IPR001792">
    <property type="entry name" value="Acylphosphatase-like_dom"/>
</dbReference>
<dbReference type="InterPro" id="IPR036046">
    <property type="entry name" value="Acylphosphatase-like_dom_sf"/>
</dbReference>
<dbReference type="InterPro" id="IPR017968">
    <property type="entry name" value="Acylphosphatase_CS"/>
</dbReference>
<dbReference type="NCBIfam" id="NF010999">
    <property type="entry name" value="PRK14425.1"/>
    <property type="match status" value="1"/>
</dbReference>
<dbReference type="PANTHER" id="PTHR47268">
    <property type="entry name" value="ACYLPHOSPHATASE"/>
    <property type="match status" value="1"/>
</dbReference>
<dbReference type="PANTHER" id="PTHR47268:SF4">
    <property type="entry name" value="ACYLPHOSPHATASE"/>
    <property type="match status" value="1"/>
</dbReference>
<dbReference type="Pfam" id="PF00708">
    <property type="entry name" value="Acylphosphatase"/>
    <property type="match status" value="1"/>
</dbReference>
<dbReference type="PRINTS" id="PR00112">
    <property type="entry name" value="ACYLPHPHTASE"/>
</dbReference>
<dbReference type="SUPFAM" id="SSF54975">
    <property type="entry name" value="Acylphosphatase/BLUF domain-like"/>
    <property type="match status" value="1"/>
</dbReference>
<dbReference type="PROSITE" id="PS00150">
    <property type="entry name" value="ACYLPHOSPHATASE_1"/>
    <property type="match status" value="1"/>
</dbReference>
<dbReference type="PROSITE" id="PS00151">
    <property type="entry name" value="ACYLPHOSPHATASE_2"/>
    <property type="match status" value="1"/>
</dbReference>
<dbReference type="PROSITE" id="PS51160">
    <property type="entry name" value="ACYLPHOSPHATASE_3"/>
    <property type="match status" value="1"/>
</dbReference>
<sequence length="94" mass="10126">MSDHNEAVRVRISGRVQGVGFRMWTRDEALRLGVTGWVRNEADGSVSALIAGADSAISAMIERLRRGPAGASVSGVETEVAQLENMPRDFRITG</sequence>